<comment type="function">
    <text evidence="1">Isoform G2P plays an essential role in viral DNA replication. Binds the origin of replication and cleaves the dsDNA replicative form I (RFI) and becomes covalently bound to it via phosphotyrosine bond, generating the dsDNA replicative form II (RFII). In turn, viral DNA replication initiates at the 3'-OH of the cleavage site. After one round of rolling circle synthesis, protein G2P is linked to the newly synthesized ssDNA and joins the ends of the displaced strand to generate a circular single-stranded molecule ready to be packed into a virion.</text>
</comment>
<comment type="function">
    <text evidence="1">Isoform G10P protein binds to double-stranded DNA and prevents hydrolysis by nucleases. Additionally, G10P is an inhibitor of DNA replication and may have a role in the transition from semiconservative replicative form DNA replication to single-stranded DNA synthesis in the life cycle.</text>
</comment>
<comment type="catalytic activity">
    <reaction>
        <text>ATP + (deoxyribonucleotide)n-3'-hydroxyl + 5'-phospho-(deoxyribonucleotide)m = (deoxyribonucleotide)n+m + AMP + diphosphate.</text>
        <dbReference type="EC" id="6.5.1.1"/>
    </reaction>
</comment>
<comment type="alternative products">
    <event type="alternative initiation"/>
    <isoform>
        <id>P69546-1</id>
        <name>G2P</name>
        <name>Gene 2 protein</name>
        <sequence type="displayed"/>
    </isoform>
    <isoform>
        <id>P69546-2</id>
        <name>G10P</name>
        <name>Gene 10 protein</name>
        <sequence type="described" ref="VSP_018670"/>
    </isoform>
</comment>
<comment type="similarity">
    <text evidence="3">Belongs to the inovirus G2P protein family.</text>
</comment>
<proteinExistence type="evidence at protein level"/>
<feature type="chain" id="PRO_0000003305" description="Replication-associated protein G2P">
    <location>
        <begin position="1"/>
        <end position="410"/>
    </location>
</feature>
<feature type="splice variant" id="VSP_018670" description="In isoform G10P." evidence="3">
    <location>
        <begin position="1"/>
        <end position="299"/>
    </location>
</feature>
<feature type="modified residue" description="N-formylmethionine" evidence="2">
    <location sequence="P69546-2">
        <position position="1"/>
    </location>
</feature>
<evidence type="ECO:0000250" key="1"/>
<evidence type="ECO:0000269" key="2">
    <source>
    </source>
</evidence>
<evidence type="ECO:0000305" key="3"/>
<organism>
    <name type="scientific">Enterobacteria phage f1</name>
    <name type="common">Bacteriophage f1</name>
    <dbReference type="NCBI Taxonomy" id="10863"/>
    <lineage>
        <taxon>Viruses</taxon>
        <taxon>Monodnaviria</taxon>
        <taxon>Loebvirae</taxon>
        <taxon>Hofneiviricota</taxon>
        <taxon>Faserviricetes</taxon>
        <taxon>Tubulavirales</taxon>
        <taxon>Inoviridae</taxon>
        <taxon>Inovirus</taxon>
        <taxon>Enterobacteria phage M13</taxon>
    </lineage>
</organism>
<dbReference type="EC" id="3.1.21.-"/>
<dbReference type="EC" id="6.5.1.1"/>
<dbReference type="EMBL" id="V00606">
    <property type="protein sequence ID" value="CAA23876.1"/>
    <property type="molecule type" value="Genomic_DNA"/>
</dbReference>
<dbReference type="EMBL" id="V00606">
    <property type="protein sequence ID" value="CAA23867.1"/>
    <property type="molecule type" value="Genomic_DNA"/>
</dbReference>
<dbReference type="EMBL" id="J02448">
    <property type="protein sequence ID" value="AAA32209.1"/>
    <property type="molecule type" value="Genomic_DNA"/>
</dbReference>
<dbReference type="EMBL" id="J02448">
    <property type="protein sequence ID" value="AAA32210.1"/>
    <property type="molecule type" value="Genomic_DNA"/>
</dbReference>
<dbReference type="EMBL" id="M10641">
    <property type="protein sequence ID" value="AAA32223.1"/>
    <property type="molecule type" value="Genomic_DNA"/>
</dbReference>
<dbReference type="EMBL" id="M10744">
    <property type="protein sequence ID" value="AAA32225.1"/>
    <property type="molecule type" value="Genomic_DNA"/>
</dbReference>
<dbReference type="PIR" id="C04264">
    <property type="entry name" value="Z2BPF1"/>
</dbReference>
<dbReference type="Proteomes" id="UP000002557">
    <property type="component" value="Genome"/>
</dbReference>
<dbReference type="Proteomes" id="UP000241027">
    <property type="component" value="Genome"/>
</dbReference>
<dbReference type="GO" id="GO:0003677">
    <property type="term" value="F:DNA binding"/>
    <property type="evidence" value="ECO:0007669"/>
    <property type="project" value="UniProtKB-KW"/>
</dbReference>
<dbReference type="GO" id="GO:0003910">
    <property type="term" value="F:DNA ligase (ATP) activity"/>
    <property type="evidence" value="ECO:0007669"/>
    <property type="project" value="UniProtKB-EC"/>
</dbReference>
<dbReference type="GO" id="GO:0004519">
    <property type="term" value="F:endonuclease activity"/>
    <property type="evidence" value="ECO:0007669"/>
    <property type="project" value="UniProtKB-KW"/>
</dbReference>
<dbReference type="GO" id="GO:0006260">
    <property type="term" value="P:DNA replication"/>
    <property type="evidence" value="ECO:0007669"/>
    <property type="project" value="UniProtKB-KW"/>
</dbReference>
<dbReference type="GO" id="GO:0039684">
    <property type="term" value="P:rolling circle single-stranded viral DNA replication"/>
    <property type="evidence" value="ECO:0000314"/>
    <property type="project" value="UniProtKB"/>
</dbReference>
<dbReference type="InterPro" id="IPR006516">
    <property type="entry name" value="G2P"/>
</dbReference>
<dbReference type="InterPro" id="IPR022688">
    <property type="entry name" value="G2P_C"/>
</dbReference>
<dbReference type="InterPro" id="IPR022686">
    <property type="entry name" value="G2P_N"/>
</dbReference>
<dbReference type="NCBIfam" id="TIGR01629">
    <property type="entry name" value="rep_II_X"/>
    <property type="match status" value="1"/>
</dbReference>
<dbReference type="Pfam" id="PF05155">
    <property type="entry name" value="G2P_X_C"/>
    <property type="match status" value="1"/>
</dbReference>
<dbReference type="Pfam" id="PF05144">
    <property type="entry name" value="Phage_CRI"/>
    <property type="match status" value="1"/>
</dbReference>
<accession>P69546</accession>
<accession>P03659</accession>
<name>REP_BPF1</name>
<protein>
    <recommendedName>
        <fullName>Replication-associated protein G2P</fullName>
        <shortName>Rep</shortName>
        <ecNumber>3.1.21.-</ecNumber>
        <ecNumber>6.5.1.1</ecNumber>
    </recommendedName>
    <alternativeName>
        <fullName>G2P</fullName>
    </alternativeName>
    <alternativeName>
        <fullName>Gene 2 protein</fullName>
    </alternativeName>
</protein>
<gene>
    <name type="primary">II</name>
</gene>
<reference key="1">
    <citation type="journal article" date="1981" name="Gene">
        <title>Nucleotide sequence and genome organisation of filamentous bacteriophages f1 and fd.</title>
        <authorList>
            <person name="Beck E."/>
            <person name="Zink B."/>
        </authorList>
    </citation>
    <scope>NUCLEOTIDE SEQUENCE [GENOMIC DNA]</scope>
</reference>
<reference key="2">
    <citation type="journal article" date="1982" name="J. Virol.">
        <title>Nucleotide sequence of bacteriophage f1 DNA.</title>
        <authorList>
            <person name="Hill D.F."/>
            <person name="Petersen G.B."/>
        </authorList>
    </citation>
    <scope>NUCLEOTIDE SEQUENCE [GENOMIC DNA]</scope>
</reference>
<reference key="3">
    <citation type="journal article" date="1979" name="J. Mol. Biol.">
        <title>DNA sequence analysis of the defective interfering particles of bacteriophage f1.</title>
        <authorList>
            <person name="Ravetch J.V."/>
            <person name="Horiuchi K."/>
            <person name="Zinder N.D."/>
        </authorList>
    </citation>
    <scope>NUCLEOTIDE SEQUENCE [GENOMIC DNA] OF 1-10</scope>
</reference>
<reference key="4">
    <citation type="journal article" date="1978" name="Proc. Natl. Acad. Sci. U.S.A.">
        <title>Nucleotide sequence of the recognition site for the restriction-modification enzyme of Escherichia coli B.</title>
        <authorList>
            <person name="Ravetch J.V."/>
            <person name="Horiuchi K."/>
            <person name="Zinder N.D."/>
        </authorList>
    </citation>
    <scope>NUCLEOTIDE SEQUENCE [GENOMIC DNA] OF 61-132</scope>
</reference>
<reference key="5">
    <citation type="journal article" date="1981" name="J. Biol. Chem.">
        <title>Bacteriophage f1 gene II and X proteins. Isolation and characterization of the products of two overlapping genes.</title>
        <authorList>
            <person name="Yen T.S.B."/>
            <person name="Webster R.E."/>
        </authorList>
    </citation>
    <scope>IDENTIFICATION OF PROTEIN</scope>
    <scope>FORMYLATION AT MET-1 (ISOFORM G10P)</scope>
</reference>
<keyword id="KW-0024">Alternative initiation</keyword>
<keyword id="KW-0235">DNA replication</keyword>
<keyword id="KW-0238">DNA-binding</keyword>
<keyword id="KW-0255">Endonuclease</keyword>
<keyword id="KW-0291">Formylation</keyword>
<keyword id="KW-0378">Hydrolase</keyword>
<keyword id="KW-0436">Ligase</keyword>
<keyword id="KW-0540">Nuclease</keyword>
<organismHost>
    <name type="scientific">Escherichia coli</name>
    <dbReference type="NCBI Taxonomy" id="562"/>
</organismHost>
<sequence>MIDMLVLRLPFIDSLVCSRLSGNDLIAFVDLSKIATLSGMNLSARTVEYHIDGDLTVSGLSHPFESLPTHYSGIAFKIYEGSKNFYPCVEIKASPAKVLQGHNVFGTTDLALCSEALLLNFANSLPCLYDLLDVNATTISRIDATFSARAPNENIAKQVIDHLRNVSNGQTKSTRSQNWESTVTWNETSRHRTLVAYLKHVELQHQIQQLSSKPSAKMTSYQKEQLKVLSNPDLLEFASGLVRFEARIETRYLKSFGLPLNLFDAIRFASDYNSQGKDLIFDLWSFSFSELFKAFEGDSMNIYDDSAVLDAIQSKHFTITPSGKTSFAKASRYFGFYRRLVNEGYDSVALTMPRNSFWRYVSALVECGIPKSQLMNLSTCNNVVPLVRFINVDFSSQRPDWYNEPVLKIA</sequence>